<name>WASC3_XENLA</name>
<sequence length="199" mass="21684">MDEDGLPIVGSGIDLTKVPPIQQKRTVAFLNQFVVHSVQFLNRFATVCEEKLSALSLRIQQIETTLNILEAKLSSIPGLEDVKVEAQHISESNISNGHLPSQPDAQSVVVSPQSDNNSMNDGILQKEEAKSENITTVSKDPRYARYLKMVQVGVPVMAIKNKMIAEGLNPDLLETPDAPVPDGEPEAEESSDSESSFSD</sequence>
<dbReference type="EMBL" id="BC074483">
    <property type="protein sequence ID" value="AAH74483.1"/>
    <property type="molecule type" value="mRNA"/>
</dbReference>
<dbReference type="RefSeq" id="NP_001086321.1">
    <property type="nucleotide sequence ID" value="NM_001092852.1"/>
</dbReference>
<dbReference type="SMR" id="Q6DKA1"/>
<dbReference type="DNASU" id="444750"/>
<dbReference type="GeneID" id="444750"/>
<dbReference type="KEGG" id="xla:444750"/>
<dbReference type="AGR" id="Xenbase:XB-GENE-988951"/>
<dbReference type="CTD" id="444750"/>
<dbReference type="Xenbase" id="XB-GENE-988951">
    <property type="gene designation" value="washc3.L"/>
</dbReference>
<dbReference type="OrthoDB" id="268027at2759"/>
<dbReference type="Proteomes" id="UP000186698">
    <property type="component" value="Chromosome 3L"/>
</dbReference>
<dbReference type="Bgee" id="444750">
    <property type="expression patterns" value="Expressed in pancreas and 19 other cell types or tissues"/>
</dbReference>
<dbReference type="GO" id="GO:0071203">
    <property type="term" value="C:WASH complex"/>
    <property type="evidence" value="ECO:0000250"/>
    <property type="project" value="UniProtKB"/>
</dbReference>
<dbReference type="GO" id="GO:0030041">
    <property type="term" value="P:actin filament polymerization"/>
    <property type="evidence" value="ECO:0000318"/>
    <property type="project" value="GO_Central"/>
</dbReference>
<dbReference type="GO" id="GO:0006887">
    <property type="term" value="P:exocytosis"/>
    <property type="evidence" value="ECO:0000318"/>
    <property type="project" value="GO_Central"/>
</dbReference>
<dbReference type="FunFam" id="1.20.5.110:FF:000025">
    <property type="entry name" value="Putative WASH complex subunit CCDC53"/>
    <property type="match status" value="1"/>
</dbReference>
<dbReference type="Gene3D" id="1.20.5.110">
    <property type="match status" value="1"/>
</dbReference>
<dbReference type="InterPro" id="IPR019309">
    <property type="entry name" value="WASHC3"/>
</dbReference>
<dbReference type="PANTHER" id="PTHR13015">
    <property type="entry name" value="PROTEIN AD-016-RELATED"/>
    <property type="match status" value="1"/>
</dbReference>
<dbReference type="PANTHER" id="PTHR13015:SF0">
    <property type="entry name" value="WASH COMPLEX SUBUNIT 3"/>
    <property type="match status" value="1"/>
</dbReference>
<dbReference type="Pfam" id="PF10152">
    <property type="entry name" value="CCDC53"/>
    <property type="match status" value="1"/>
</dbReference>
<feature type="chain" id="PRO_0000390957" description="WASH complex subunit 3">
    <location>
        <begin position="1"/>
        <end position="199"/>
    </location>
</feature>
<feature type="region of interest" description="Disordered" evidence="3">
    <location>
        <begin position="93"/>
        <end position="136"/>
    </location>
</feature>
<feature type="region of interest" description="Disordered" evidence="3">
    <location>
        <begin position="170"/>
        <end position="199"/>
    </location>
</feature>
<feature type="coiled-coil region" evidence="2">
    <location>
        <begin position="47"/>
        <end position="76"/>
    </location>
</feature>
<feature type="compositionally biased region" description="Polar residues" evidence="3">
    <location>
        <begin position="93"/>
        <end position="120"/>
    </location>
</feature>
<feature type="compositionally biased region" description="Acidic residues" evidence="3">
    <location>
        <begin position="183"/>
        <end position="192"/>
    </location>
</feature>
<protein>
    <recommendedName>
        <fullName evidence="1">WASH complex subunit 3</fullName>
    </recommendedName>
    <alternativeName>
        <fullName>Coiled-coil domain-containing protein 53</fullName>
    </alternativeName>
</protein>
<accession>Q6DKA1</accession>
<evidence type="ECO:0000250" key="1">
    <source>
        <dbReference type="UniProtKB" id="Q9Y3C0"/>
    </source>
</evidence>
<evidence type="ECO:0000255" key="2"/>
<evidence type="ECO:0000256" key="3">
    <source>
        <dbReference type="SAM" id="MobiDB-lite"/>
    </source>
</evidence>
<evidence type="ECO:0000305" key="4"/>
<comment type="subunit">
    <text evidence="1">Component of the WASH complex.</text>
</comment>
<comment type="similarity">
    <text evidence="4">Belongs to the CCDC53 family.</text>
</comment>
<organism>
    <name type="scientific">Xenopus laevis</name>
    <name type="common">African clawed frog</name>
    <dbReference type="NCBI Taxonomy" id="8355"/>
    <lineage>
        <taxon>Eukaryota</taxon>
        <taxon>Metazoa</taxon>
        <taxon>Chordata</taxon>
        <taxon>Craniata</taxon>
        <taxon>Vertebrata</taxon>
        <taxon>Euteleostomi</taxon>
        <taxon>Amphibia</taxon>
        <taxon>Batrachia</taxon>
        <taxon>Anura</taxon>
        <taxon>Pipoidea</taxon>
        <taxon>Pipidae</taxon>
        <taxon>Xenopodinae</taxon>
        <taxon>Xenopus</taxon>
        <taxon>Xenopus</taxon>
    </lineage>
</organism>
<reference key="1">
    <citation type="submission" date="2004-06" db="EMBL/GenBank/DDBJ databases">
        <authorList>
            <consortium name="NIH - Xenopus Gene Collection (XGC) project"/>
        </authorList>
    </citation>
    <scope>NUCLEOTIDE SEQUENCE [LARGE SCALE MRNA]</scope>
    <source>
        <tissue>Brain</tissue>
    </source>
</reference>
<gene>
    <name evidence="1" type="primary">washc3</name>
    <name type="synonym">ccdc53</name>
    <name type="synonym">MGC84788</name>
</gene>
<keyword id="KW-0175">Coiled coil</keyword>
<keyword id="KW-1185">Reference proteome</keyword>
<proteinExistence type="evidence at transcript level"/>